<organism>
    <name type="scientific">Protobothrops mucrosquamatus</name>
    <name type="common">Taiwan habu</name>
    <name type="synonym">Trimeresurus mucrosquamatus</name>
    <dbReference type="NCBI Taxonomy" id="103944"/>
    <lineage>
        <taxon>Eukaryota</taxon>
        <taxon>Metazoa</taxon>
        <taxon>Chordata</taxon>
        <taxon>Craniata</taxon>
        <taxon>Vertebrata</taxon>
        <taxon>Euteleostomi</taxon>
        <taxon>Lepidosauria</taxon>
        <taxon>Squamata</taxon>
        <taxon>Bifurcata</taxon>
        <taxon>Unidentata</taxon>
        <taxon>Episquamata</taxon>
        <taxon>Toxicofera</taxon>
        <taxon>Serpentes</taxon>
        <taxon>Colubroidea</taxon>
        <taxon>Viperidae</taxon>
        <taxon>Crotalinae</taxon>
        <taxon>Protobothrops</taxon>
    </lineage>
</organism>
<keyword id="KW-0903">Direct protein sequencing</keyword>
<keyword id="KW-1015">Disulfide bond</keyword>
<keyword id="KW-1199">Hemostasis impairing toxin</keyword>
<keyword id="KW-1202">Platelet aggregation activating toxin</keyword>
<keyword id="KW-0964">Secreted</keyword>
<keyword id="KW-0732">Signal</keyword>
<keyword id="KW-0800">Toxin</keyword>
<reference key="1">
    <citation type="journal article" date="2010" name="Toxicon">
        <title>Characterization and molecular cloning of one novel C-type lectin from the venom of Taiwan habu (Trimeresurus mucrosquamatus).</title>
        <authorList>
            <person name="Chen Y.S."/>
            <person name="Huang C.H."/>
            <person name="Chiou S.H."/>
        </authorList>
    </citation>
    <scope>NUCLEOTIDE SEQUENCE [GENOMIC DNA / MRNA]</scope>
    <scope>PROTEIN SEQUENCE OF 24-43</scope>
    <scope>FUNCTION</scope>
    <scope>SUBUNIT</scope>
    <scope>3D-STRUCTURE MODELING</scope>
    <source>
        <tissue>Venom</tissue>
        <tissue>Venom gland</tissue>
    </source>
</reference>
<reference key="2">
    <citation type="journal article" date="1996" name="J. Protein Chem.">
        <title>Isolation of a venom factor devoid of proteolytic activity from Taiwan habu (Trimeresurus mucrosquamatus): N-terminal sequence homology and no functional similarity to factors IX/X-binding proteins and botrocetin.</title>
        <authorList>
            <person name="Chiou S.-H."/>
            <person name="Huang K.-F."/>
            <person name="Chow L.-P."/>
            <person name="Tsugita A."/>
            <person name="Wu S.-H."/>
        </authorList>
    </citation>
    <scope>PARTIAL PROTEIN SEQUENCE</scope>
    <scope>FUNCTION</scope>
    <scope>SUBUNIT</scope>
    <source>
        <tissue>Venom</tissue>
    </source>
</reference>
<feature type="signal peptide" evidence="2">
    <location>
        <begin position="1"/>
        <end position="23"/>
    </location>
</feature>
<feature type="chain" id="PRO_0000355299" description="Snaclec trimecetin subunit alpha">
    <location>
        <begin position="24"/>
        <end position="156"/>
    </location>
</feature>
<feature type="domain" description="C-type lectin" evidence="1">
    <location>
        <begin position="32"/>
        <end position="151"/>
    </location>
</feature>
<feature type="disulfide bond" evidence="1">
    <location>
        <begin position="25"/>
        <end position="36"/>
    </location>
</feature>
<feature type="disulfide bond" evidence="1">
    <location>
        <begin position="53"/>
        <end position="150"/>
    </location>
</feature>
<feature type="disulfide bond" description="Interchain (with C-98 in subunit beta)" evidence="1">
    <location>
        <position position="102"/>
    </location>
</feature>
<feature type="disulfide bond" evidence="1">
    <location>
        <begin position="125"/>
        <end position="142"/>
    </location>
</feature>
<comment type="function">
    <text evidence="2 3">Snaclec that induces platelet aggregation in either human platelet rich plasma (PRP) or washed platelet suspensions. It causes aggregation in a dose-dependent manner even in the absence of various platelet agonists such as ADP or von Willebrand factor (vWF). Interestingly, it does not induce aggregation in rabbit PRP. A monoclonal antibody against the platelet GPIb receptor blocks the aggregation induced by trimecetin, suggesting that it acts by binding to GPIb (GP1BA/GP1BB).</text>
</comment>
<comment type="subunit">
    <text evidence="2 3">Heterodimer of subunits alpha and beta; disulfide-linked.</text>
</comment>
<comment type="subcellular location">
    <subcellularLocation>
        <location>Secreted</location>
    </subcellularLocation>
</comment>
<comment type="tissue specificity">
    <text>Expressed by the venom gland.</text>
</comment>
<comment type="miscellaneous">
    <text evidence="5">Negative results: does not show affinity to coagulation factors IX and X in the presence of calcium ion. Also shows no inhibition on thrombin (PubMed:8968958).</text>
</comment>
<comment type="similarity">
    <text evidence="4">Belongs to the snaclec family.</text>
</comment>
<protein>
    <recommendedName>
        <fullName>Snaclec trimecetin subunit alpha</fullName>
    </recommendedName>
</protein>
<dbReference type="EMBL" id="AY871785">
    <property type="protein sequence ID" value="AAW69915.1"/>
    <property type="molecule type" value="Genomic_DNA"/>
</dbReference>
<dbReference type="SMR" id="Q5FZI6"/>
<dbReference type="GO" id="GO:0005576">
    <property type="term" value="C:extracellular region"/>
    <property type="evidence" value="ECO:0007669"/>
    <property type="project" value="UniProtKB-SubCell"/>
</dbReference>
<dbReference type="GO" id="GO:0090729">
    <property type="term" value="F:toxin activity"/>
    <property type="evidence" value="ECO:0007669"/>
    <property type="project" value="UniProtKB-KW"/>
</dbReference>
<dbReference type="FunFam" id="3.10.100.10:FF:000087">
    <property type="entry name" value="Snaclec rhodocetin subunit delta"/>
    <property type="match status" value="1"/>
</dbReference>
<dbReference type="Gene3D" id="3.10.100.10">
    <property type="entry name" value="Mannose-Binding Protein A, subunit A"/>
    <property type="match status" value="1"/>
</dbReference>
<dbReference type="InterPro" id="IPR001304">
    <property type="entry name" value="C-type_lectin-like"/>
</dbReference>
<dbReference type="InterPro" id="IPR016186">
    <property type="entry name" value="C-type_lectin-like/link_sf"/>
</dbReference>
<dbReference type="InterPro" id="IPR050111">
    <property type="entry name" value="C-type_lectin/snaclec_domain"/>
</dbReference>
<dbReference type="InterPro" id="IPR018378">
    <property type="entry name" value="C-type_lectin_CS"/>
</dbReference>
<dbReference type="InterPro" id="IPR016187">
    <property type="entry name" value="CTDL_fold"/>
</dbReference>
<dbReference type="PANTHER" id="PTHR22803">
    <property type="entry name" value="MANNOSE, PHOSPHOLIPASE, LECTIN RECEPTOR RELATED"/>
    <property type="match status" value="1"/>
</dbReference>
<dbReference type="Pfam" id="PF00059">
    <property type="entry name" value="Lectin_C"/>
    <property type="match status" value="1"/>
</dbReference>
<dbReference type="PRINTS" id="PR01504">
    <property type="entry name" value="PNCREATITSAP"/>
</dbReference>
<dbReference type="SMART" id="SM00034">
    <property type="entry name" value="CLECT"/>
    <property type="match status" value="1"/>
</dbReference>
<dbReference type="SUPFAM" id="SSF56436">
    <property type="entry name" value="C-type lectin-like"/>
    <property type="match status" value="1"/>
</dbReference>
<dbReference type="PROSITE" id="PS00615">
    <property type="entry name" value="C_TYPE_LECTIN_1"/>
    <property type="match status" value="1"/>
</dbReference>
<dbReference type="PROSITE" id="PS50041">
    <property type="entry name" value="C_TYPE_LECTIN_2"/>
    <property type="match status" value="1"/>
</dbReference>
<accession>Q5FZI6</accession>
<evidence type="ECO:0000255" key="1">
    <source>
        <dbReference type="PROSITE-ProRule" id="PRU00040"/>
    </source>
</evidence>
<evidence type="ECO:0000269" key="2">
    <source>
    </source>
</evidence>
<evidence type="ECO:0000269" key="3">
    <source>
    </source>
</evidence>
<evidence type="ECO:0000305" key="4"/>
<evidence type="ECO:0000305" key="5">
    <source>
    </source>
</evidence>
<name>SLTA_PROMU</name>
<proteinExistence type="evidence at protein level"/>
<sequence>MGRFIFVSFGLLVVFLSLSGTGADCPSDWSSFRRYCYKPFKQLKTWEDAERFCWEQVKGAHLVSIESSGEGDFVAQLLSENIKTTKYHVWIGLSIQNKRQQCRSIWSDGSSVSYENLVKPFSKKCFVLKKESEFHKWFNIYCGERNLFMCKFLQPR</sequence>